<accession>B1I9G2</accession>
<organism>
    <name type="scientific">Streptococcus pneumoniae (strain Hungary19A-6)</name>
    <dbReference type="NCBI Taxonomy" id="487214"/>
    <lineage>
        <taxon>Bacteria</taxon>
        <taxon>Bacillati</taxon>
        <taxon>Bacillota</taxon>
        <taxon>Bacilli</taxon>
        <taxon>Lactobacillales</taxon>
        <taxon>Streptococcaceae</taxon>
        <taxon>Streptococcus</taxon>
    </lineage>
</organism>
<proteinExistence type="inferred from homology"/>
<gene>
    <name type="ordered locus">SPH_2284</name>
</gene>
<protein>
    <recommendedName>
        <fullName evidence="1">N-acetyldiaminopimelate deacetylase</fullName>
        <ecNumber evidence="1">3.5.1.47</ecNumber>
    </recommendedName>
</protein>
<evidence type="ECO:0000255" key="1">
    <source>
        <dbReference type="HAMAP-Rule" id="MF_01692"/>
    </source>
</evidence>
<name>DAPEL_STRPI</name>
<sequence length="376" mass="41636">MLDLIQTRRALHQIPEIGLEEFKTQAYLLDVIEKLTTGKDFVQIRTWRTGILVYLQGSQPERTIGWRTDIDGLPIVEQTGLPFASQHQGRMHACGHDFHMTIALGCLERALEEQPKNNLLFLFQPAEENEAGGMLMYEDDAFGDWLPDQFYGLHVRPDLKVGQIATNTHTLFAGTCEVKIRFKGKGGHAAFPHEANDALVAASYFVTQVQSVVSRNVNPIEGAVVTFGVFQAGTTNNVITDTAFLHGTIRALTQDMSLLVQKRVKTVAEGVAAAFDMEVEVELKQGGYLPVENNPALARELMDFFDEKDGIELIDIEPAMTGEDFGYLLSKVDGVMFWLGIDSPYALHHPQMSPKEEVLAIGVAAVSSFLKKKAAE</sequence>
<comment type="function">
    <text evidence="1">Catalyzes the conversion of N-acetyl-diaminopimelate to diaminopimelate and acetate.</text>
</comment>
<comment type="catalytic activity">
    <reaction evidence="1">
        <text>N-acetyl-(2S,6S)-2,6-diaminopimelate + H2O = (2S,6S)-2,6-diaminopimelate + acetate</text>
        <dbReference type="Rhea" id="RHEA:20405"/>
        <dbReference type="ChEBI" id="CHEBI:15377"/>
        <dbReference type="ChEBI" id="CHEBI:30089"/>
        <dbReference type="ChEBI" id="CHEBI:57609"/>
        <dbReference type="ChEBI" id="CHEBI:58767"/>
        <dbReference type="EC" id="3.5.1.47"/>
    </reaction>
</comment>
<comment type="pathway">
    <text evidence="1">Amino-acid biosynthesis; L-lysine biosynthesis via DAP pathway; LL-2,6-diaminopimelate from (S)-tetrahydrodipicolinate (acetylase route): step 3/3.</text>
</comment>
<comment type="similarity">
    <text evidence="1">Belongs to the peptidase M20A family. N-acetyldiaminopimelate deacetylase subfamily.</text>
</comment>
<dbReference type="EC" id="3.5.1.47" evidence="1"/>
<dbReference type="EMBL" id="CP000936">
    <property type="protein sequence ID" value="ACA35504.1"/>
    <property type="molecule type" value="Genomic_DNA"/>
</dbReference>
<dbReference type="RefSeq" id="WP_000885064.1">
    <property type="nucleotide sequence ID" value="NC_010380.1"/>
</dbReference>
<dbReference type="SMR" id="B1I9G2"/>
<dbReference type="KEGG" id="spv:SPH_2284"/>
<dbReference type="HOGENOM" id="CLU_023257_0_1_9"/>
<dbReference type="UniPathway" id="UPA00034">
    <property type="reaction ID" value="UER00024"/>
</dbReference>
<dbReference type="Proteomes" id="UP000002163">
    <property type="component" value="Chromosome"/>
</dbReference>
<dbReference type="GO" id="GO:0050118">
    <property type="term" value="F:N-acetyldiaminopimelate deacetylase activity"/>
    <property type="evidence" value="ECO:0007669"/>
    <property type="project" value="UniProtKB-UniRule"/>
</dbReference>
<dbReference type="GO" id="GO:0019877">
    <property type="term" value="P:diaminopimelate biosynthetic process"/>
    <property type="evidence" value="ECO:0007669"/>
    <property type="project" value="UniProtKB-UniRule"/>
</dbReference>
<dbReference type="GO" id="GO:0009089">
    <property type="term" value="P:lysine biosynthetic process via diaminopimelate"/>
    <property type="evidence" value="ECO:0007669"/>
    <property type="project" value="UniProtKB-UniRule"/>
</dbReference>
<dbReference type="CDD" id="cd05670">
    <property type="entry name" value="M20_Acy1_YkuR-like"/>
    <property type="match status" value="1"/>
</dbReference>
<dbReference type="FunFam" id="3.30.70.360:FF:000001">
    <property type="entry name" value="N-acetyldiaminopimelate deacetylase"/>
    <property type="match status" value="1"/>
</dbReference>
<dbReference type="Gene3D" id="3.30.70.360">
    <property type="match status" value="1"/>
</dbReference>
<dbReference type="Gene3D" id="3.40.630.10">
    <property type="entry name" value="Zn peptidases"/>
    <property type="match status" value="1"/>
</dbReference>
<dbReference type="HAMAP" id="MF_01692">
    <property type="entry name" value="DapEL"/>
    <property type="match status" value="1"/>
</dbReference>
<dbReference type="InterPro" id="IPR023905">
    <property type="entry name" value="AcetylDAP_deacetylase"/>
</dbReference>
<dbReference type="InterPro" id="IPR017439">
    <property type="entry name" value="Amidohydrolase"/>
</dbReference>
<dbReference type="InterPro" id="IPR036264">
    <property type="entry name" value="Bact_exopeptidase_dim_dom"/>
</dbReference>
<dbReference type="InterPro" id="IPR002933">
    <property type="entry name" value="Peptidase_M20"/>
</dbReference>
<dbReference type="InterPro" id="IPR011650">
    <property type="entry name" value="Peptidase_M20_dimer"/>
</dbReference>
<dbReference type="NCBIfam" id="TIGR01891">
    <property type="entry name" value="amidohydrolases"/>
    <property type="match status" value="1"/>
</dbReference>
<dbReference type="PANTHER" id="PTHR11014:SF98">
    <property type="entry name" value="N-ACETYLDIAMINOPIMELATE DEACETYLASE"/>
    <property type="match status" value="1"/>
</dbReference>
<dbReference type="PANTHER" id="PTHR11014">
    <property type="entry name" value="PEPTIDASE M20 FAMILY MEMBER"/>
    <property type="match status" value="1"/>
</dbReference>
<dbReference type="Pfam" id="PF07687">
    <property type="entry name" value="M20_dimer"/>
    <property type="match status" value="1"/>
</dbReference>
<dbReference type="Pfam" id="PF01546">
    <property type="entry name" value="Peptidase_M20"/>
    <property type="match status" value="1"/>
</dbReference>
<dbReference type="PIRSF" id="PIRSF005962">
    <property type="entry name" value="Pept_M20D_amidohydro"/>
    <property type="match status" value="1"/>
</dbReference>
<dbReference type="SUPFAM" id="SSF55031">
    <property type="entry name" value="Bacterial exopeptidase dimerisation domain"/>
    <property type="match status" value="1"/>
</dbReference>
<dbReference type="SUPFAM" id="SSF53187">
    <property type="entry name" value="Zn-dependent exopeptidases"/>
    <property type="match status" value="1"/>
</dbReference>
<reference key="1">
    <citation type="journal article" date="2010" name="Genome Biol.">
        <title>Structure and dynamics of the pan-genome of Streptococcus pneumoniae and closely related species.</title>
        <authorList>
            <person name="Donati C."/>
            <person name="Hiller N.L."/>
            <person name="Tettelin H."/>
            <person name="Muzzi A."/>
            <person name="Croucher N.J."/>
            <person name="Angiuoli S.V."/>
            <person name="Oggioni M."/>
            <person name="Dunning Hotopp J.C."/>
            <person name="Hu F.Z."/>
            <person name="Riley D.R."/>
            <person name="Covacci A."/>
            <person name="Mitchell T.J."/>
            <person name="Bentley S.D."/>
            <person name="Kilian M."/>
            <person name="Ehrlich G.D."/>
            <person name="Rappuoli R."/>
            <person name="Moxon E.R."/>
            <person name="Masignani V."/>
        </authorList>
    </citation>
    <scope>NUCLEOTIDE SEQUENCE [LARGE SCALE GENOMIC DNA]</scope>
    <source>
        <strain>Hungary19A-6</strain>
    </source>
</reference>
<feature type="chain" id="PRO_0000376786" description="N-acetyldiaminopimelate deacetylase">
    <location>
        <begin position="1"/>
        <end position="376"/>
    </location>
</feature>
<feature type="active site" evidence="1">
    <location>
        <position position="69"/>
    </location>
</feature>
<feature type="active site" description="Proton acceptor" evidence="1">
    <location>
        <position position="128"/>
    </location>
</feature>
<keyword id="KW-0028">Amino-acid biosynthesis</keyword>
<keyword id="KW-0220">Diaminopimelate biosynthesis</keyword>
<keyword id="KW-0378">Hydrolase</keyword>
<keyword id="KW-0457">Lysine biosynthesis</keyword>